<protein>
    <recommendedName>
        <fullName>Interactor of constitutive active ROPs 5</fullName>
    </recommendedName>
    <alternativeName>
        <fullName>Protein MICROTUBULE DEPLETION DOMAIN 1</fullName>
    </alternativeName>
    <alternativeName>
        <fullName>ROP-interactive partner 3</fullName>
    </alternativeName>
</protein>
<accession>Q8VYU8</accession>
<accession>Q9LFI2</accession>
<reference key="1">
    <citation type="journal article" date="2000" name="Nature">
        <title>Sequence and analysis of chromosome 3 of the plant Arabidopsis thaliana.</title>
        <authorList>
            <person name="Salanoubat M."/>
            <person name="Lemcke K."/>
            <person name="Rieger M."/>
            <person name="Ansorge W."/>
            <person name="Unseld M."/>
            <person name="Fartmann B."/>
            <person name="Valle G."/>
            <person name="Bloecker H."/>
            <person name="Perez-Alonso M."/>
            <person name="Obermaier B."/>
            <person name="Delseny M."/>
            <person name="Boutry M."/>
            <person name="Grivell L.A."/>
            <person name="Mache R."/>
            <person name="Puigdomenech P."/>
            <person name="De Simone V."/>
            <person name="Choisne N."/>
            <person name="Artiguenave F."/>
            <person name="Robert C."/>
            <person name="Brottier P."/>
            <person name="Wincker P."/>
            <person name="Cattolico L."/>
            <person name="Weissenbach J."/>
            <person name="Saurin W."/>
            <person name="Quetier F."/>
            <person name="Schaefer M."/>
            <person name="Mueller-Auer S."/>
            <person name="Gabel C."/>
            <person name="Fuchs M."/>
            <person name="Benes V."/>
            <person name="Wurmbach E."/>
            <person name="Drzonek H."/>
            <person name="Erfle H."/>
            <person name="Jordan N."/>
            <person name="Bangert S."/>
            <person name="Wiedelmann R."/>
            <person name="Kranz H."/>
            <person name="Voss H."/>
            <person name="Holland R."/>
            <person name="Brandt P."/>
            <person name="Nyakatura G."/>
            <person name="Vezzi A."/>
            <person name="D'Angelo M."/>
            <person name="Pallavicini A."/>
            <person name="Toppo S."/>
            <person name="Simionati B."/>
            <person name="Conrad A."/>
            <person name="Hornischer K."/>
            <person name="Kauer G."/>
            <person name="Loehnert T.-H."/>
            <person name="Nordsiek G."/>
            <person name="Reichelt J."/>
            <person name="Scharfe M."/>
            <person name="Schoen O."/>
            <person name="Bargues M."/>
            <person name="Terol J."/>
            <person name="Climent J."/>
            <person name="Navarro P."/>
            <person name="Collado C."/>
            <person name="Perez-Perez A."/>
            <person name="Ottenwaelder B."/>
            <person name="Duchemin D."/>
            <person name="Cooke R."/>
            <person name="Laudie M."/>
            <person name="Berger-Llauro C."/>
            <person name="Purnelle B."/>
            <person name="Masuy D."/>
            <person name="de Haan M."/>
            <person name="Maarse A.C."/>
            <person name="Alcaraz J.-P."/>
            <person name="Cottet A."/>
            <person name="Casacuberta E."/>
            <person name="Monfort A."/>
            <person name="Argiriou A."/>
            <person name="Flores M."/>
            <person name="Liguori R."/>
            <person name="Vitale D."/>
            <person name="Mannhaupt G."/>
            <person name="Haase D."/>
            <person name="Schoof H."/>
            <person name="Rudd S."/>
            <person name="Zaccaria P."/>
            <person name="Mewes H.-W."/>
            <person name="Mayer K.F.X."/>
            <person name="Kaul S."/>
            <person name="Town C.D."/>
            <person name="Koo H.L."/>
            <person name="Tallon L.J."/>
            <person name="Jenkins J."/>
            <person name="Rooney T."/>
            <person name="Rizzo M."/>
            <person name="Walts A."/>
            <person name="Utterback T."/>
            <person name="Fujii C.Y."/>
            <person name="Shea T.P."/>
            <person name="Creasy T.H."/>
            <person name="Haas B."/>
            <person name="Maiti R."/>
            <person name="Wu D."/>
            <person name="Peterson J."/>
            <person name="Van Aken S."/>
            <person name="Pai G."/>
            <person name="Militscher J."/>
            <person name="Sellers P."/>
            <person name="Gill J.E."/>
            <person name="Feldblyum T.V."/>
            <person name="Preuss D."/>
            <person name="Lin X."/>
            <person name="Nierman W.C."/>
            <person name="Salzberg S.L."/>
            <person name="White O."/>
            <person name="Venter J.C."/>
            <person name="Fraser C.M."/>
            <person name="Kaneko T."/>
            <person name="Nakamura Y."/>
            <person name="Sato S."/>
            <person name="Kato T."/>
            <person name="Asamizu E."/>
            <person name="Sasamoto S."/>
            <person name="Kimura T."/>
            <person name="Idesawa K."/>
            <person name="Kawashima K."/>
            <person name="Kishida Y."/>
            <person name="Kiyokawa C."/>
            <person name="Kohara M."/>
            <person name="Matsumoto M."/>
            <person name="Matsuno A."/>
            <person name="Muraki A."/>
            <person name="Nakayama S."/>
            <person name="Nakazaki N."/>
            <person name="Shinpo S."/>
            <person name="Takeuchi C."/>
            <person name="Wada T."/>
            <person name="Watanabe A."/>
            <person name="Yamada M."/>
            <person name="Yasuda M."/>
            <person name="Tabata S."/>
        </authorList>
    </citation>
    <scope>NUCLEOTIDE SEQUENCE [LARGE SCALE GENOMIC DNA]</scope>
    <source>
        <strain>cv. Columbia</strain>
    </source>
</reference>
<reference key="2">
    <citation type="journal article" date="2017" name="Plant J.">
        <title>Araport11: a complete reannotation of the Arabidopsis thaliana reference genome.</title>
        <authorList>
            <person name="Cheng C.Y."/>
            <person name="Krishnakumar V."/>
            <person name="Chan A.P."/>
            <person name="Thibaud-Nissen F."/>
            <person name="Schobel S."/>
            <person name="Town C.D."/>
        </authorList>
    </citation>
    <scope>GENOME REANNOTATION</scope>
    <source>
        <strain>cv. Columbia</strain>
    </source>
</reference>
<reference key="3">
    <citation type="journal article" date="2003" name="Science">
        <title>Empirical analysis of transcriptional activity in the Arabidopsis genome.</title>
        <authorList>
            <person name="Yamada K."/>
            <person name="Lim J."/>
            <person name="Dale J.M."/>
            <person name="Chen H."/>
            <person name="Shinn P."/>
            <person name="Palm C.J."/>
            <person name="Southwick A.M."/>
            <person name="Wu H.C."/>
            <person name="Kim C.J."/>
            <person name="Nguyen M."/>
            <person name="Pham P.K."/>
            <person name="Cheuk R.F."/>
            <person name="Karlin-Newmann G."/>
            <person name="Liu S.X."/>
            <person name="Lam B."/>
            <person name="Sakano H."/>
            <person name="Wu T."/>
            <person name="Yu G."/>
            <person name="Miranda M."/>
            <person name="Quach H.L."/>
            <person name="Tripp M."/>
            <person name="Chang C.H."/>
            <person name="Lee J.M."/>
            <person name="Toriumi M.J."/>
            <person name="Chan M.M."/>
            <person name="Tang C.C."/>
            <person name="Onodera C.S."/>
            <person name="Deng J.M."/>
            <person name="Akiyama K."/>
            <person name="Ansari Y."/>
            <person name="Arakawa T."/>
            <person name="Banh J."/>
            <person name="Banno F."/>
            <person name="Bowser L."/>
            <person name="Brooks S.Y."/>
            <person name="Carninci P."/>
            <person name="Chao Q."/>
            <person name="Choy N."/>
            <person name="Enju A."/>
            <person name="Goldsmith A.D."/>
            <person name="Gurjal M."/>
            <person name="Hansen N.F."/>
            <person name="Hayashizaki Y."/>
            <person name="Johnson-Hopson C."/>
            <person name="Hsuan V.W."/>
            <person name="Iida K."/>
            <person name="Karnes M."/>
            <person name="Khan S."/>
            <person name="Koesema E."/>
            <person name="Ishida J."/>
            <person name="Jiang P.X."/>
            <person name="Jones T."/>
            <person name="Kawai J."/>
            <person name="Kamiya A."/>
            <person name="Meyers C."/>
            <person name="Nakajima M."/>
            <person name="Narusaka M."/>
            <person name="Seki M."/>
            <person name="Sakurai T."/>
            <person name="Satou M."/>
            <person name="Tamse R."/>
            <person name="Vaysberg M."/>
            <person name="Wallender E.K."/>
            <person name="Wong C."/>
            <person name="Yamamura Y."/>
            <person name="Yuan S."/>
            <person name="Shinozaki K."/>
            <person name="Davis R.W."/>
            <person name="Theologis A."/>
            <person name="Ecker J.R."/>
        </authorList>
    </citation>
    <scope>NUCLEOTIDE SEQUENCE [LARGE SCALE MRNA] (ISOFORM 1)</scope>
    <source>
        <strain>cv. Columbia</strain>
    </source>
</reference>
<reference key="4">
    <citation type="journal article" date="2004" name="Genome Res.">
        <title>Whole genome sequence comparisons and 'full-length' cDNA sequences: a combined approach to evaluate and improve Arabidopsis genome annotation.</title>
        <authorList>
            <person name="Castelli V."/>
            <person name="Aury J.-M."/>
            <person name="Jaillon O."/>
            <person name="Wincker P."/>
            <person name="Clepet C."/>
            <person name="Menard M."/>
            <person name="Cruaud C."/>
            <person name="Quetier F."/>
            <person name="Scarpelli C."/>
            <person name="Schaechter V."/>
            <person name="Temple G."/>
            <person name="Caboche M."/>
            <person name="Weissenbach J."/>
            <person name="Salanoubat M."/>
        </authorList>
    </citation>
    <scope>NUCLEOTIDE SEQUENCE [LARGE SCALE MRNA] (ISOFORM 2)</scope>
    <source>
        <strain>cv. Columbia</strain>
    </source>
</reference>
<reference key="5">
    <citation type="journal article" date="2008" name="Mol. Plant">
        <title>RIP1 (ROP Interactive Partner 1)/ICR1 marks pollen germination sites and may act in the ROP1 pathway in the control of polarized pollen growth.</title>
        <authorList>
            <person name="Li S."/>
            <person name="Gu Y."/>
            <person name="Yan A."/>
            <person name="Lord E."/>
            <person name="Yang Z.B."/>
        </authorList>
    </citation>
    <scope>INTERACTION WITH ARAC11</scope>
    <scope>GENE FAMILY</scope>
    <scope>NOMENCLATURE</scope>
</reference>
<reference key="6">
    <citation type="journal article" date="2010" name="Eur. J. Cell Biol.">
        <title>RIP3 and AtKinesin-13A - a novel interaction linking Rho proteins of plants to microtubules.</title>
        <authorList>
            <person name="Mucha E."/>
            <person name="Hoefle C."/>
            <person name="Huckelhoven R."/>
            <person name="Berken A."/>
        </authorList>
    </citation>
    <scope>FUNCTION</scope>
    <scope>INTERACTION WITH ARAC4; ARAC11 AND KIN13A</scope>
    <scope>MUTAGENESIS OF ARG-349 AND GLN-353</scope>
    <scope>SUBCELLULAR LOCATION</scope>
    <scope>DOMAIN</scope>
</reference>
<reference key="7">
    <citation type="journal article" date="2010" name="Curr. Biol.">
        <title>Wood cell-wall structure requires local 2D-microtubule disassembly by a novel plasma membrane-anchored protein.</title>
        <authorList>
            <person name="Oda Y."/>
            <person name="Iida Y."/>
            <person name="Kondo Y."/>
            <person name="Fukuda H."/>
        </authorList>
    </citation>
    <scope>FUNCTION</scope>
    <scope>SUBCELLULAR LOCATION</scope>
    <scope>TISSUE SPECIFICITY</scope>
</reference>
<reference key="8">
    <citation type="journal article" date="2012" name="Science">
        <title>Initiation of cell wall pattern by a Rho- and microtubule-driven symmetry breaking.</title>
        <authorList>
            <person name="Oda Y."/>
            <person name="Fukuda H."/>
        </authorList>
    </citation>
    <scope>FUNCTION</scope>
    <scope>INTERACTION WITH ARAC10</scope>
    <scope>SUBCELLULAR LOCATION</scope>
</reference>
<reference key="9">
    <citation type="journal article" date="2013" name="Plant Cell">
        <title>Rho of plant GTPase signaling regulates the behavior of Arabidopsis kinesin-13A to establish secondary cell wall patterns.</title>
        <authorList>
            <person name="Oda Y."/>
            <person name="Fukuda H."/>
        </authorList>
    </citation>
    <scope>INTERACTION WITH KIN13A</scope>
    <scope>FUNCTION</scope>
    <scope>SUBUNIT</scope>
</reference>
<organism>
    <name type="scientific">Arabidopsis thaliana</name>
    <name type="common">Mouse-ear cress</name>
    <dbReference type="NCBI Taxonomy" id="3702"/>
    <lineage>
        <taxon>Eukaryota</taxon>
        <taxon>Viridiplantae</taxon>
        <taxon>Streptophyta</taxon>
        <taxon>Embryophyta</taxon>
        <taxon>Tracheophyta</taxon>
        <taxon>Spermatophyta</taxon>
        <taxon>Magnoliopsida</taxon>
        <taxon>eudicotyledons</taxon>
        <taxon>Gunneridae</taxon>
        <taxon>Pentapetalae</taxon>
        <taxon>rosids</taxon>
        <taxon>malvids</taxon>
        <taxon>Brassicales</taxon>
        <taxon>Brassicaceae</taxon>
        <taxon>Camelineae</taxon>
        <taxon>Arabidopsis</taxon>
    </lineage>
</organism>
<feature type="chain" id="PRO_0000356304" description="Interactor of constitutive active ROPs 5">
    <location>
        <begin position="1"/>
        <end position="396"/>
    </location>
</feature>
<feature type="region of interest" description="Disordered" evidence="2">
    <location>
        <begin position="1"/>
        <end position="49"/>
    </location>
</feature>
<feature type="region of interest" description="Disordered" evidence="2">
    <location>
        <begin position="99"/>
        <end position="122"/>
    </location>
</feature>
<feature type="coiled-coil region" evidence="1">
    <location>
        <begin position="67"/>
        <end position="124"/>
    </location>
</feature>
<feature type="coiled-coil region" evidence="1">
    <location>
        <begin position="158"/>
        <end position="366"/>
    </location>
</feature>
<feature type="compositionally biased region" description="Basic and acidic residues" evidence="2">
    <location>
        <begin position="99"/>
        <end position="115"/>
    </location>
</feature>
<feature type="splice variant" id="VSP_036032" description="In isoform 2." evidence="8">
    <location>
        <begin position="65"/>
        <end position="66"/>
    </location>
</feature>
<feature type="mutagenesis site" description="No effect on ROPs binding." evidence="5">
    <original>R</original>
    <variation>A</variation>
    <location>
        <position position="349"/>
    </location>
</feature>
<feature type="mutagenesis site" description="Loss of ROPs binding, but no effect on oligomerization." evidence="5">
    <original>Q</original>
    <variation>A</variation>
    <location>
        <position position="353"/>
    </location>
</feature>
<feature type="sequence conflict" description="In Ref. 3; AAL47457/AAM47335." evidence="9" ref="3">
    <original>A</original>
    <variation>T</variation>
    <location>
        <position position="120"/>
    </location>
</feature>
<feature type="sequence conflict" description="In Ref. 4; BX822258." evidence="9" ref="4">
    <original>A</original>
    <variation>V</variation>
    <location>
        <position position="361"/>
    </location>
</feature>
<dbReference type="EMBL" id="AL132966">
    <property type="protein sequence ID" value="CAB67642.1"/>
    <property type="molecule type" value="Genomic_DNA"/>
</dbReference>
<dbReference type="EMBL" id="CP002686">
    <property type="protein sequence ID" value="AEE79072.1"/>
    <property type="molecule type" value="Genomic_DNA"/>
</dbReference>
<dbReference type="EMBL" id="CP002686">
    <property type="protein sequence ID" value="AEE79073.1"/>
    <property type="molecule type" value="Genomic_DNA"/>
</dbReference>
<dbReference type="EMBL" id="CP002686">
    <property type="protein sequence ID" value="AEE79074.1"/>
    <property type="molecule type" value="Genomic_DNA"/>
</dbReference>
<dbReference type="EMBL" id="CP002686">
    <property type="protein sequence ID" value="ANM64278.1"/>
    <property type="molecule type" value="Genomic_DNA"/>
</dbReference>
<dbReference type="EMBL" id="CP002686">
    <property type="protein sequence ID" value="ANM64280.1"/>
    <property type="molecule type" value="Genomic_DNA"/>
</dbReference>
<dbReference type="EMBL" id="AY069906">
    <property type="protein sequence ID" value="AAL47457.1"/>
    <property type="molecule type" value="mRNA"/>
</dbReference>
<dbReference type="EMBL" id="AY113027">
    <property type="protein sequence ID" value="AAM47335.1"/>
    <property type="molecule type" value="mRNA"/>
</dbReference>
<dbReference type="EMBL" id="BX822258">
    <property type="status" value="NOT_ANNOTATED_CDS"/>
    <property type="molecule type" value="mRNA"/>
</dbReference>
<dbReference type="PIR" id="T45875">
    <property type="entry name" value="T45875"/>
</dbReference>
<dbReference type="RefSeq" id="NP_001326318.1">
    <molecule id="Q8VYU8-1"/>
    <property type="nucleotide sequence ID" value="NM_001339615.1"/>
</dbReference>
<dbReference type="RefSeq" id="NP_001326320.1">
    <molecule id="Q8VYU8-1"/>
    <property type="nucleotide sequence ID" value="NM_001339613.1"/>
</dbReference>
<dbReference type="RefSeq" id="NP_190903.2">
    <molecule id="Q8VYU8-1"/>
    <property type="nucleotide sequence ID" value="NM_115195.3"/>
</dbReference>
<dbReference type="RefSeq" id="NP_974423.1">
    <molecule id="Q8VYU8-2"/>
    <property type="nucleotide sequence ID" value="NM_202694.2"/>
</dbReference>
<dbReference type="RefSeq" id="NP_974424.1">
    <molecule id="Q8VYU8-2"/>
    <property type="nucleotide sequence ID" value="NM_202695.1"/>
</dbReference>
<dbReference type="SMR" id="Q8VYU8"/>
<dbReference type="BioGRID" id="9820">
    <property type="interactions" value="9"/>
</dbReference>
<dbReference type="FunCoup" id="Q8VYU8">
    <property type="interactions" value="1333"/>
</dbReference>
<dbReference type="IntAct" id="Q8VYU8">
    <property type="interactions" value="7"/>
</dbReference>
<dbReference type="STRING" id="3702.Q8VYU8"/>
<dbReference type="PaxDb" id="3702-AT3G53350.1"/>
<dbReference type="EnsemblPlants" id="AT3G53350.1">
    <molecule id="Q8VYU8-1"/>
    <property type="protein sequence ID" value="AT3G53350.1"/>
    <property type="gene ID" value="AT3G53350"/>
</dbReference>
<dbReference type="EnsemblPlants" id="AT3G53350.2">
    <molecule id="Q8VYU8-2"/>
    <property type="protein sequence ID" value="AT3G53350.2"/>
    <property type="gene ID" value="AT3G53350"/>
</dbReference>
<dbReference type="EnsemblPlants" id="AT3G53350.3">
    <molecule id="Q8VYU8-2"/>
    <property type="protein sequence ID" value="AT3G53350.3"/>
    <property type="gene ID" value="AT3G53350"/>
</dbReference>
<dbReference type="EnsemblPlants" id="AT3G53350.5">
    <molecule id="Q8VYU8-1"/>
    <property type="protein sequence ID" value="AT3G53350.5"/>
    <property type="gene ID" value="AT3G53350"/>
</dbReference>
<dbReference type="EnsemblPlants" id="AT3G53350.7">
    <molecule id="Q8VYU8-1"/>
    <property type="protein sequence ID" value="AT3G53350.7"/>
    <property type="gene ID" value="AT3G53350"/>
</dbReference>
<dbReference type="GeneID" id="824503"/>
<dbReference type="Gramene" id="AT3G53350.1">
    <molecule id="Q8VYU8-1"/>
    <property type="protein sequence ID" value="AT3G53350.1"/>
    <property type="gene ID" value="AT3G53350"/>
</dbReference>
<dbReference type="Gramene" id="AT3G53350.2">
    <molecule id="Q8VYU8-2"/>
    <property type="protein sequence ID" value="AT3G53350.2"/>
    <property type="gene ID" value="AT3G53350"/>
</dbReference>
<dbReference type="Gramene" id="AT3G53350.3">
    <molecule id="Q8VYU8-2"/>
    <property type="protein sequence ID" value="AT3G53350.3"/>
    <property type="gene ID" value="AT3G53350"/>
</dbReference>
<dbReference type="Gramene" id="AT3G53350.5">
    <molecule id="Q8VYU8-1"/>
    <property type="protein sequence ID" value="AT3G53350.5"/>
    <property type="gene ID" value="AT3G53350"/>
</dbReference>
<dbReference type="Gramene" id="AT3G53350.7">
    <molecule id="Q8VYU8-1"/>
    <property type="protein sequence ID" value="AT3G53350.7"/>
    <property type="gene ID" value="AT3G53350"/>
</dbReference>
<dbReference type="KEGG" id="ath:AT3G53350"/>
<dbReference type="Araport" id="AT3G53350"/>
<dbReference type="TAIR" id="AT3G53350">
    <property type="gene designation" value="RIP3"/>
</dbReference>
<dbReference type="eggNOG" id="ENOG502QT2U">
    <property type="taxonomic scope" value="Eukaryota"/>
</dbReference>
<dbReference type="HOGENOM" id="CLU_022222_0_0_1"/>
<dbReference type="InParanoid" id="Q8VYU8"/>
<dbReference type="OMA" id="TRAANTE"/>
<dbReference type="PhylomeDB" id="Q8VYU8"/>
<dbReference type="PRO" id="PR:Q8VYU8"/>
<dbReference type="Proteomes" id="UP000006548">
    <property type="component" value="Chromosome 3"/>
</dbReference>
<dbReference type="ExpressionAtlas" id="Q8VYU8">
    <property type="expression patterns" value="baseline and differential"/>
</dbReference>
<dbReference type="GO" id="GO:0005737">
    <property type="term" value="C:cytoplasm"/>
    <property type="evidence" value="ECO:0007669"/>
    <property type="project" value="UniProtKB-KW"/>
</dbReference>
<dbReference type="GO" id="GO:0005874">
    <property type="term" value="C:microtubule"/>
    <property type="evidence" value="ECO:0000314"/>
    <property type="project" value="TAIR"/>
</dbReference>
<dbReference type="GO" id="GO:0005634">
    <property type="term" value="C:nucleus"/>
    <property type="evidence" value="ECO:0007005"/>
    <property type="project" value="TAIR"/>
</dbReference>
<dbReference type="GO" id="GO:0005886">
    <property type="term" value="C:plasma membrane"/>
    <property type="evidence" value="ECO:0007669"/>
    <property type="project" value="UniProtKB-SubCell"/>
</dbReference>
<dbReference type="GO" id="GO:0043622">
    <property type="term" value="P:cortical microtubule organization"/>
    <property type="evidence" value="ECO:0000314"/>
    <property type="project" value="TAIR"/>
</dbReference>
<dbReference type="GO" id="GO:0009664">
    <property type="term" value="P:plant-type cell wall organization"/>
    <property type="evidence" value="ECO:0000314"/>
    <property type="project" value="TAIR"/>
</dbReference>
<dbReference type="InterPro" id="IPR029688">
    <property type="entry name" value="ICR"/>
</dbReference>
<dbReference type="PANTHER" id="PTHR34224">
    <property type="entry name" value="INTERACTOR OF CONSTITUTIVE ACTIVE ROPS 2, CHLOROPLASTIC-RELATED"/>
    <property type="match status" value="1"/>
</dbReference>
<dbReference type="PANTHER" id="PTHR34224:SF13">
    <property type="entry name" value="INTERACTOR OF CONSTITUTIVE ACTIVE ROPS 5"/>
    <property type="match status" value="1"/>
</dbReference>
<evidence type="ECO:0000255" key="1"/>
<evidence type="ECO:0000256" key="2">
    <source>
        <dbReference type="SAM" id="MobiDB-lite"/>
    </source>
</evidence>
<evidence type="ECO:0000269" key="3">
    <source>
    </source>
</evidence>
<evidence type="ECO:0000269" key="4">
    <source>
    </source>
</evidence>
<evidence type="ECO:0000269" key="5">
    <source>
    </source>
</evidence>
<evidence type="ECO:0000269" key="6">
    <source>
    </source>
</evidence>
<evidence type="ECO:0000269" key="7">
    <source>
    </source>
</evidence>
<evidence type="ECO:0000303" key="8">
    <source>
    </source>
</evidence>
<evidence type="ECO:0000305" key="9"/>
<proteinExistence type="evidence at protein level"/>
<gene>
    <name type="primary">ICR5</name>
    <name type="synonym">MIDD1</name>
    <name type="synonym">RIP3</name>
    <name type="ordered locus">At3g53350</name>
    <name type="ORF">F4P12.50</name>
</gene>
<name>ICR5_ARATH</name>
<keyword id="KW-0025">Alternative splicing</keyword>
<keyword id="KW-1003">Cell membrane</keyword>
<keyword id="KW-0175">Coiled coil</keyword>
<keyword id="KW-0963">Cytoplasm</keyword>
<keyword id="KW-0206">Cytoskeleton</keyword>
<keyword id="KW-0472">Membrane</keyword>
<keyword id="KW-1185">Reference proteome</keyword>
<sequence>MQTPKSRPGSLELPQKKSPLPAPKVVRRLKPSGAESDPKTKTISKTQIPKVVADRRSARIPLNEIQKKRTGRIPELESTISQLQEELKKAKEELNRSEALKREAQEEAEDAKHQLMDINASEDSRIEELRKLSQERDKTWQSELEAMQRQHGMDSTALSSAINEVQKLKSKLFESESELEQSKYEVRSLEKLVRQLEEERVNSRDSSSSMEVEELKEAMNLSRQEITQLKSAVEAAETRYQEEYIQSTLQIRSAYEQTEAVKSRYSQREAELTEELNRTKDEIEGLRKELMEKVKEDESTGDLKKLESDLMEVRGSLMDKEMELQILRSAMEKKVETANTEAMEAELKRVKIQCEQWRKAAETAASILNNDEERTDSIETSKMLKKFGVLLKKNHK</sequence>
<comment type="function">
    <text evidence="4 5 6 7">ROP effector binding specifically activated ROPs and linking them to the microtubule cytoskeleton. Involved in ROP-regulated polar growth. Involved in local disassembly of cortical microtubules when associated with ARAC10 and KIN13A and conversely also mediates the elimination of ARAC10 from the plasma membrane by the cortical microtubules. Accumulates at the plus end of shrinking microtubules. Targets KIN13A to microtubules.</text>
</comment>
<comment type="subunit">
    <text evidence="3 5 6 7">Component of the active ARAC10-IRC5-KIN13A complex (PubMed:24280391). Homooligomer. Interacts (via C-terminus) with ARAC4, ARAC10, ARAC11 and (via N-terminus) with KIN13A (via C-terminus), but no interactions with SEC3A.</text>
</comment>
<comment type="subcellular location">
    <subcellularLocation>
        <location evidence="4 6">Cell membrane</location>
    </subcellularLocation>
    <subcellularLocation>
        <location evidence="4 5 6">Cytoplasm</location>
        <location evidence="4 5 6">Cytoskeleton</location>
    </subcellularLocation>
    <text evidence="4 6">In xylem cells, preferentially colocalizes with cortical microtubules located beneath the secondary wall pits (PubMed:20619818). May be associated to the plasma membrane through the interaction with ARAC10 (PubMed:22984069).</text>
</comment>
<comment type="alternative products">
    <event type="alternative splicing"/>
    <isoform>
        <id>Q8VYU8-1</id>
        <name>1</name>
        <sequence type="displayed"/>
    </isoform>
    <isoform>
        <id>Q8VYU8-2</id>
        <name>2</name>
        <sequence type="described" ref="VSP_036032"/>
    </isoform>
</comment>
<comment type="tissue specificity">
    <text evidence="4">Expressed in xylem cells in the roots and in stamens, petals and pollen.</text>
</comment>
<comment type="domain">
    <text evidence="4 5">The N-terminal part (1-122) is necessary and sufficient for homooligomerization (PubMed:20832900) and for binding to microtubules while the C-terminal domain is anchored to the plasma membrane (PubMed:20619818).</text>
</comment>
<comment type="similarity">
    <text evidence="9">Belongs to the ICR family.</text>
</comment>